<comment type="function">
    <text evidence="1">Catalyzes the attachment of proline to tRNA(Pro) in a two-step reaction: proline is first activated by ATP to form Pro-AMP and then transferred to the acceptor end of tRNA(Pro). As ProRS can inadvertently accommodate and process non-cognate amino acids such as alanine and cysteine, to avoid such errors it has two additional distinct editing activities against alanine. One activity is designated as 'pretransfer' editing and involves the tRNA(Pro)-independent hydrolysis of activated Ala-AMP. The other activity is designated 'posttransfer' editing and involves deacylation of mischarged Ala-tRNA(Pro). The misacylated Cys-tRNA(Pro) is not edited by ProRS.</text>
</comment>
<comment type="catalytic activity">
    <reaction evidence="1">
        <text>tRNA(Pro) + L-proline + ATP = L-prolyl-tRNA(Pro) + AMP + diphosphate</text>
        <dbReference type="Rhea" id="RHEA:14305"/>
        <dbReference type="Rhea" id="RHEA-COMP:9700"/>
        <dbReference type="Rhea" id="RHEA-COMP:9702"/>
        <dbReference type="ChEBI" id="CHEBI:30616"/>
        <dbReference type="ChEBI" id="CHEBI:33019"/>
        <dbReference type="ChEBI" id="CHEBI:60039"/>
        <dbReference type="ChEBI" id="CHEBI:78442"/>
        <dbReference type="ChEBI" id="CHEBI:78532"/>
        <dbReference type="ChEBI" id="CHEBI:456215"/>
        <dbReference type="EC" id="6.1.1.15"/>
    </reaction>
</comment>
<comment type="subunit">
    <text evidence="1">Homodimer.</text>
</comment>
<comment type="subcellular location">
    <subcellularLocation>
        <location evidence="1">Cytoplasm</location>
    </subcellularLocation>
</comment>
<comment type="domain">
    <text evidence="1">Consists of three domains: the N-terminal catalytic domain, the editing domain and the C-terminal anticodon-binding domain.</text>
</comment>
<comment type="similarity">
    <text evidence="1">Belongs to the class-II aminoacyl-tRNA synthetase family. ProS type 1 subfamily.</text>
</comment>
<keyword id="KW-0030">Aminoacyl-tRNA synthetase</keyword>
<keyword id="KW-0067">ATP-binding</keyword>
<keyword id="KW-0963">Cytoplasm</keyword>
<keyword id="KW-0436">Ligase</keyword>
<keyword id="KW-0547">Nucleotide-binding</keyword>
<keyword id="KW-0648">Protein biosynthesis</keyword>
<feature type="chain" id="PRO_1000069142" description="Proline--tRNA ligase">
    <location>
        <begin position="1"/>
        <end position="567"/>
    </location>
</feature>
<evidence type="ECO:0000255" key="1">
    <source>
        <dbReference type="HAMAP-Rule" id="MF_01569"/>
    </source>
</evidence>
<name>SYP_GEOTN</name>
<dbReference type="EC" id="6.1.1.15" evidence="1"/>
<dbReference type="EMBL" id="CP000557">
    <property type="protein sequence ID" value="ABO66485.1"/>
    <property type="molecule type" value="Genomic_DNA"/>
</dbReference>
<dbReference type="RefSeq" id="WP_011887150.1">
    <property type="nucleotide sequence ID" value="NC_009328.1"/>
</dbReference>
<dbReference type="SMR" id="A4IMD1"/>
<dbReference type="KEGG" id="gtn:GTNG_1111"/>
<dbReference type="eggNOG" id="COG0442">
    <property type="taxonomic scope" value="Bacteria"/>
</dbReference>
<dbReference type="HOGENOM" id="CLU_016739_0_0_9"/>
<dbReference type="Proteomes" id="UP000001578">
    <property type="component" value="Chromosome"/>
</dbReference>
<dbReference type="GO" id="GO:0005829">
    <property type="term" value="C:cytosol"/>
    <property type="evidence" value="ECO:0007669"/>
    <property type="project" value="TreeGrafter"/>
</dbReference>
<dbReference type="GO" id="GO:0002161">
    <property type="term" value="F:aminoacyl-tRNA deacylase activity"/>
    <property type="evidence" value="ECO:0007669"/>
    <property type="project" value="InterPro"/>
</dbReference>
<dbReference type="GO" id="GO:0005524">
    <property type="term" value="F:ATP binding"/>
    <property type="evidence" value="ECO:0007669"/>
    <property type="project" value="UniProtKB-UniRule"/>
</dbReference>
<dbReference type="GO" id="GO:0140096">
    <property type="term" value="F:catalytic activity, acting on a protein"/>
    <property type="evidence" value="ECO:0007669"/>
    <property type="project" value="UniProtKB-ARBA"/>
</dbReference>
<dbReference type="GO" id="GO:0004827">
    <property type="term" value="F:proline-tRNA ligase activity"/>
    <property type="evidence" value="ECO:0007669"/>
    <property type="project" value="UniProtKB-UniRule"/>
</dbReference>
<dbReference type="GO" id="GO:0016740">
    <property type="term" value="F:transferase activity"/>
    <property type="evidence" value="ECO:0007669"/>
    <property type="project" value="UniProtKB-ARBA"/>
</dbReference>
<dbReference type="GO" id="GO:0006433">
    <property type="term" value="P:prolyl-tRNA aminoacylation"/>
    <property type="evidence" value="ECO:0007669"/>
    <property type="project" value="UniProtKB-UniRule"/>
</dbReference>
<dbReference type="CDD" id="cd04334">
    <property type="entry name" value="ProRS-INS"/>
    <property type="match status" value="1"/>
</dbReference>
<dbReference type="CDD" id="cd00861">
    <property type="entry name" value="ProRS_anticodon_short"/>
    <property type="match status" value="1"/>
</dbReference>
<dbReference type="CDD" id="cd00779">
    <property type="entry name" value="ProRS_core_prok"/>
    <property type="match status" value="1"/>
</dbReference>
<dbReference type="FunFam" id="3.30.930.10:FF:000043">
    <property type="entry name" value="Proline--tRNA ligase"/>
    <property type="match status" value="1"/>
</dbReference>
<dbReference type="FunFam" id="3.30.930.10:FF:000062">
    <property type="entry name" value="Proline--tRNA ligase"/>
    <property type="match status" value="1"/>
</dbReference>
<dbReference type="FunFam" id="3.40.50.800:FF:000011">
    <property type="entry name" value="Proline--tRNA ligase"/>
    <property type="match status" value="1"/>
</dbReference>
<dbReference type="Gene3D" id="3.40.50.800">
    <property type="entry name" value="Anticodon-binding domain"/>
    <property type="match status" value="1"/>
</dbReference>
<dbReference type="Gene3D" id="3.30.930.10">
    <property type="entry name" value="Bira Bifunctional Protein, Domain 2"/>
    <property type="match status" value="2"/>
</dbReference>
<dbReference type="Gene3D" id="3.90.960.10">
    <property type="entry name" value="YbaK/aminoacyl-tRNA synthetase-associated domain"/>
    <property type="match status" value="1"/>
</dbReference>
<dbReference type="HAMAP" id="MF_01569">
    <property type="entry name" value="Pro_tRNA_synth_type1"/>
    <property type="match status" value="1"/>
</dbReference>
<dbReference type="InterPro" id="IPR002314">
    <property type="entry name" value="aa-tRNA-synt_IIb"/>
</dbReference>
<dbReference type="InterPro" id="IPR006195">
    <property type="entry name" value="aa-tRNA-synth_II"/>
</dbReference>
<dbReference type="InterPro" id="IPR045864">
    <property type="entry name" value="aa-tRNA-synth_II/BPL/LPL"/>
</dbReference>
<dbReference type="InterPro" id="IPR004154">
    <property type="entry name" value="Anticodon-bd"/>
</dbReference>
<dbReference type="InterPro" id="IPR036621">
    <property type="entry name" value="Anticodon-bd_dom_sf"/>
</dbReference>
<dbReference type="InterPro" id="IPR002316">
    <property type="entry name" value="Pro-tRNA-ligase_IIa"/>
</dbReference>
<dbReference type="InterPro" id="IPR004500">
    <property type="entry name" value="Pro-tRNA-synth_IIa_bac-type"/>
</dbReference>
<dbReference type="InterPro" id="IPR023717">
    <property type="entry name" value="Pro-tRNA-Synthase_IIa_type1"/>
</dbReference>
<dbReference type="InterPro" id="IPR050062">
    <property type="entry name" value="Pro-tRNA_synthetase"/>
</dbReference>
<dbReference type="InterPro" id="IPR044140">
    <property type="entry name" value="ProRS_anticodon_short"/>
</dbReference>
<dbReference type="InterPro" id="IPR033730">
    <property type="entry name" value="ProRS_core_prok"/>
</dbReference>
<dbReference type="InterPro" id="IPR036754">
    <property type="entry name" value="YbaK/aa-tRNA-synt-asso_dom_sf"/>
</dbReference>
<dbReference type="InterPro" id="IPR007214">
    <property type="entry name" value="YbaK/aa-tRNA-synth-assoc-dom"/>
</dbReference>
<dbReference type="NCBIfam" id="NF006625">
    <property type="entry name" value="PRK09194.1"/>
    <property type="match status" value="1"/>
</dbReference>
<dbReference type="NCBIfam" id="TIGR00409">
    <property type="entry name" value="proS_fam_II"/>
    <property type="match status" value="1"/>
</dbReference>
<dbReference type="PANTHER" id="PTHR42753">
    <property type="entry name" value="MITOCHONDRIAL RIBOSOME PROTEIN L39/PROLYL-TRNA LIGASE FAMILY MEMBER"/>
    <property type="match status" value="1"/>
</dbReference>
<dbReference type="PANTHER" id="PTHR42753:SF2">
    <property type="entry name" value="PROLINE--TRNA LIGASE"/>
    <property type="match status" value="1"/>
</dbReference>
<dbReference type="Pfam" id="PF03129">
    <property type="entry name" value="HGTP_anticodon"/>
    <property type="match status" value="1"/>
</dbReference>
<dbReference type="Pfam" id="PF00587">
    <property type="entry name" value="tRNA-synt_2b"/>
    <property type="match status" value="1"/>
</dbReference>
<dbReference type="Pfam" id="PF04073">
    <property type="entry name" value="tRNA_edit"/>
    <property type="match status" value="1"/>
</dbReference>
<dbReference type="PIRSF" id="PIRSF001535">
    <property type="entry name" value="ProRS_1"/>
    <property type="match status" value="1"/>
</dbReference>
<dbReference type="PRINTS" id="PR01046">
    <property type="entry name" value="TRNASYNTHPRO"/>
</dbReference>
<dbReference type="SUPFAM" id="SSF52954">
    <property type="entry name" value="Class II aaRS ABD-related"/>
    <property type="match status" value="1"/>
</dbReference>
<dbReference type="SUPFAM" id="SSF55681">
    <property type="entry name" value="Class II aaRS and biotin synthetases"/>
    <property type="match status" value="1"/>
</dbReference>
<dbReference type="SUPFAM" id="SSF55826">
    <property type="entry name" value="YbaK/ProRS associated domain"/>
    <property type="match status" value="1"/>
</dbReference>
<dbReference type="PROSITE" id="PS50862">
    <property type="entry name" value="AA_TRNA_LIGASE_II"/>
    <property type="match status" value="1"/>
</dbReference>
<reference key="1">
    <citation type="journal article" date="2007" name="Proc. Natl. Acad. Sci. U.S.A.">
        <title>Genome and proteome of long-chain alkane degrading Geobacillus thermodenitrificans NG80-2 isolated from a deep-subsurface oil reservoir.</title>
        <authorList>
            <person name="Feng L."/>
            <person name="Wang W."/>
            <person name="Cheng J."/>
            <person name="Ren Y."/>
            <person name="Zhao G."/>
            <person name="Gao C."/>
            <person name="Tang Y."/>
            <person name="Liu X."/>
            <person name="Han W."/>
            <person name="Peng X."/>
            <person name="Liu R."/>
            <person name="Wang L."/>
        </authorList>
    </citation>
    <scope>NUCLEOTIDE SEQUENCE [LARGE SCALE GENOMIC DNA]</scope>
    <source>
        <strain>NG80-2</strain>
    </source>
</reference>
<gene>
    <name evidence="1" type="primary">proS</name>
    <name type="ordered locus">GTNG_1111</name>
</gene>
<organism>
    <name type="scientific">Geobacillus thermodenitrificans (strain NG80-2)</name>
    <dbReference type="NCBI Taxonomy" id="420246"/>
    <lineage>
        <taxon>Bacteria</taxon>
        <taxon>Bacillati</taxon>
        <taxon>Bacillota</taxon>
        <taxon>Bacilli</taxon>
        <taxon>Bacillales</taxon>
        <taxon>Anoxybacillaceae</taxon>
        <taxon>Geobacillus</taxon>
    </lineage>
</organism>
<sequence length="567" mass="63275">MRQSQGFIPTLREVPADAEVKSHQLLLRAGFVRQSASGVYTFLPLGQRVLQKVEAIIREEMNRAGALELLMPALQPAELWQQSGRWYSYGPELMRLKDRHERDFVLGPTHEEMITTIVRDEVKTYKRLPLILYQIQTKFRDEKRPRFGLLRGREFIMKDAYSFHTSQESLDETYNKMYEAYANIFRRCGLNFRAVIADSGAMGGKDTHEFMVLSDIGEDTIAYSDASDYAANIEMAPVVTTYEKSSEPLVELKKVATPEQKTIAEVASYLQVAPERCIKSLLFNVDGRYVLVLVRGDHEANDVKVKNVLDATVVELATPEETERVMNCPVGSLGPIGVSEEVTIIADHAVAAIVNGVCGANEEGYHYTGVNPDRDFAVSQYADLRFVQEGDPSPDGNGTIRFARGIEVGHVFKLGTKYSEAMNAVYLDENGRTQTMIMGCYGIGVSRLVAAIAEQFADENGLVWPVSVAPFHVHLLTANAKSDEQRMLAEEWYEKLGQAGFDVLYDDRPERAGVKFADSDLIGIPLRVTVGKRASEGVVEVKVRKTGETFDVPVGELIETVRRLLQG</sequence>
<protein>
    <recommendedName>
        <fullName evidence="1">Proline--tRNA ligase</fullName>
        <ecNumber evidence="1">6.1.1.15</ecNumber>
    </recommendedName>
    <alternativeName>
        <fullName evidence="1">Prolyl-tRNA synthetase</fullName>
        <shortName evidence="1">ProRS</shortName>
    </alternativeName>
</protein>
<accession>A4IMD1</accession>
<proteinExistence type="inferred from homology"/>